<name>GLPD_MYCLE</name>
<sequence length="585" mass="63373">MTDLIQAPESEQTWPASALGPQQRAAAWERFGTEQFDVVVIGGGVVGSGCALDAATRGLKVALVEARDLASGTSSRSSKMFHGGLRYLEQLEFGLVREALYERELSLTTLAPHLVKPLPFLFPLTKRWWERPYIAAGIFLYDRLGGAKSVPAQKHLTRAGALRLSPGLKRSSLIGGIRYYDTVVDDARHTLTVARTAAHYGAVVRCSTQVVALLREGDRVIGVRVRDSEDGAVTEIRGHVVVNATGVWTDEIQALSKQRGRFQVRVSKGVHVVVPRDRIVSDVAMILRTKKSVMFIIPWGNHWIIGTTDTDWNLDLAHPAATKADIDYILQTVNTVLATPLTHADIDGVYAGLRPLLAGESDDTSKLTREHAVAVPVAGLVAIAGGKYTTYRVMAADAIDAAVAFVPARVAPSITEKVGLLGADGYFALINQVEHVAALQGLHPYRVRHLLDRYGALIGDVLALAAEAPDLLSPIQEAPGYLKVEARYAVTAEGALHLEDILARRMRVSIEYPHRGVACAREVADVVAPVLGWTAEDIDREVATYNARVEAEVLSQAQPDDVSADMLRASAPEARTKIIEPVSLT</sequence>
<protein>
    <recommendedName>
        <fullName>Glycerol-3-phosphate dehydrogenase</fullName>
        <ecNumber>1.1.5.3</ecNumber>
    </recommendedName>
</protein>
<accession>P53435</accession>
<proteinExistence type="inferred from homology"/>
<gene>
    <name type="primary">glpD</name>
    <name type="ordered locus">ML0713</name>
    <name type="ORF">L308_C1_179</name>
</gene>
<keyword id="KW-0963">Cytoplasm</keyword>
<keyword id="KW-0274">FAD</keyword>
<keyword id="KW-0285">Flavoprotein</keyword>
<keyword id="KW-0319">Glycerol metabolism</keyword>
<keyword id="KW-0560">Oxidoreductase</keyword>
<keyword id="KW-1185">Reference proteome</keyword>
<reference key="1">
    <citation type="submission" date="1994-03" db="EMBL/GenBank/DDBJ databases">
        <authorList>
            <person name="Smith D.R."/>
            <person name="Robison K."/>
        </authorList>
    </citation>
    <scope>NUCLEOTIDE SEQUENCE [GENOMIC DNA]</scope>
</reference>
<reference key="2">
    <citation type="journal article" date="2001" name="Nature">
        <title>Massive gene decay in the leprosy bacillus.</title>
        <authorList>
            <person name="Cole S.T."/>
            <person name="Eiglmeier K."/>
            <person name="Parkhill J."/>
            <person name="James K.D."/>
            <person name="Thomson N.R."/>
            <person name="Wheeler P.R."/>
            <person name="Honore N."/>
            <person name="Garnier T."/>
            <person name="Churcher C.M."/>
            <person name="Harris D.E."/>
            <person name="Mungall K.L."/>
            <person name="Basham D."/>
            <person name="Brown D."/>
            <person name="Chillingworth T."/>
            <person name="Connor R."/>
            <person name="Davies R.M."/>
            <person name="Devlin K."/>
            <person name="Duthoy S."/>
            <person name="Feltwell T."/>
            <person name="Fraser A."/>
            <person name="Hamlin N."/>
            <person name="Holroyd S."/>
            <person name="Hornsby T."/>
            <person name="Jagels K."/>
            <person name="Lacroix C."/>
            <person name="Maclean J."/>
            <person name="Moule S."/>
            <person name="Murphy L.D."/>
            <person name="Oliver K."/>
            <person name="Quail M.A."/>
            <person name="Rajandream M.A."/>
            <person name="Rutherford K.M."/>
            <person name="Rutter S."/>
            <person name="Seeger K."/>
            <person name="Simon S."/>
            <person name="Simmonds M."/>
            <person name="Skelton J."/>
            <person name="Squares R."/>
            <person name="Squares S."/>
            <person name="Stevens K."/>
            <person name="Taylor K."/>
            <person name="Whitehead S."/>
            <person name="Woodward J.R."/>
            <person name="Barrell B.G."/>
        </authorList>
    </citation>
    <scope>NUCLEOTIDE SEQUENCE [LARGE SCALE GENOMIC DNA]</scope>
    <source>
        <strain>TN</strain>
    </source>
</reference>
<evidence type="ECO:0000250" key="1"/>
<evidence type="ECO:0000305" key="2"/>
<dbReference type="EC" id="1.1.5.3"/>
<dbReference type="EMBL" id="U00022">
    <property type="protein sequence ID" value="AAA17328.1"/>
    <property type="molecule type" value="Genomic_DNA"/>
</dbReference>
<dbReference type="EMBL" id="AL583919">
    <property type="protein sequence ID" value="CAC30222.1"/>
    <property type="molecule type" value="Genomic_DNA"/>
</dbReference>
<dbReference type="PIR" id="S73029">
    <property type="entry name" value="S73029"/>
</dbReference>
<dbReference type="RefSeq" id="NP_301564.1">
    <property type="nucleotide sequence ID" value="NC_002677.1"/>
</dbReference>
<dbReference type="RefSeq" id="WP_010907888.1">
    <property type="nucleotide sequence ID" value="NC_002677.1"/>
</dbReference>
<dbReference type="SMR" id="P53435"/>
<dbReference type="STRING" id="272631.gene:17574537"/>
<dbReference type="KEGG" id="mle:ML0713"/>
<dbReference type="PATRIC" id="fig|272631.5.peg.1287"/>
<dbReference type="Leproma" id="ML0713"/>
<dbReference type="eggNOG" id="COG0578">
    <property type="taxonomic scope" value="Bacteria"/>
</dbReference>
<dbReference type="HOGENOM" id="CLU_015740_5_1_11"/>
<dbReference type="OrthoDB" id="9766796at2"/>
<dbReference type="Proteomes" id="UP000000806">
    <property type="component" value="Chromosome"/>
</dbReference>
<dbReference type="GO" id="GO:0005737">
    <property type="term" value="C:cytoplasm"/>
    <property type="evidence" value="ECO:0007669"/>
    <property type="project" value="UniProtKB-SubCell"/>
</dbReference>
<dbReference type="GO" id="GO:0004368">
    <property type="term" value="F:glycerol-3-phosphate dehydrogenase (quinone) activity"/>
    <property type="evidence" value="ECO:0007669"/>
    <property type="project" value="UniProtKB-EC"/>
</dbReference>
<dbReference type="GO" id="GO:0006071">
    <property type="term" value="P:glycerol metabolic process"/>
    <property type="evidence" value="ECO:0007669"/>
    <property type="project" value="UniProtKB-KW"/>
</dbReference>
<dbReference type="GO" id="GO:0046168">
    <property type="term" value="P:glycerol-3-phosphate catabolic process"/>
    <property type="evidence" value="ECO:0007669"/>
    <property type="project" value="TreeGrafter"/>
</dbReference>
<dbReference type="FunFam" id="1.10.8.870:FF:000003">
    <property type="entry name" value="Glycerol-3-phosphate dehydrogenase"/>
    <property type="match status" value="1"/>
</dbReference>
<dbReference type="Gene3D" id="1.10.8.870">
    <property type="entry name" value="Alpha-glycerophosphate oxidase, cap domain"/>
    <property type="match status" value="1"/>
</dbReference>
<dbReference type="Gene3D" id="3.30.9.10">
    <property type="entry name" value="D-Amino Acid Oxidase, subunit A, domain 2"/>
    <property type="match status" value="1"/>
</dbReference>
<dbReference type="Gene3D" id="3.50.50.60">
    <property type="entry name" value="FAD/NAD(P)-binding domain"/>
    <property type="match status" value="1"/>
</dbReference>
<dbReference type="InterPro" id="IPR031656">
    <property type="entry name" value="DAO_C"/>
</dbReference>
<dbReference type="InterPro" id="IPR038299">
    <property type="entry name" value="DAO_C_sf"/>
</dbReference>
<dbReference type="InterPro" id="IPR006076">
    <property type="entry name" value="FAD-dep_OxRdtase"/>
</dbReference>
<dbReference type="InterPro" id="IPR036188">
    <property type="entry name" value="FAD/NAD-bd_sf"/>
</dbReference>
<dbReference type="InterPro" id="IPR000447">
    <property type="entry name" value="G3P_DH_FAD-dep"/>
</dbReference>
<dbReference type="PANTHER" id="PTHR11985">
    <property type="entry name" value="GLYCEROL-3-PHOSPHATE DEHYDROGENASE"/>
    <property type="match status" value="1"/>
</dbReference>
<dbReference type="PANTHER" id="PTHR11985:SF31">
    <property type="entry name" value="GLYCEROL-3-PHOSPHATE DEHYDROGENASE 2"/>
    <property type="match status" value="1"/>
</dbReference>
<dbReference type="Pfam" id="PF01266">
    <property type="entry name" value="DAO"/>
    <property type="match status" value="1"/>
</dbReference>
<dbReference type="Pfam" id="PF16901">
    <property type="entry name" value="DAO_C"/>
    <property type="match status" value="1"/>
</dbReference>
<dbReference type="PRINTS" id="PR01001">
    <property type="entry name" value="FADG3PDH"/>
</dbReference>
<dbReference type="SUPFAM" id="SSF51905">
    <property type="entry name" value="FAD/NAD(P)-binding domain"/>
    <property type="match status" value="1"/>
</dbReference>
<dbReference type="PROSITE" id="PS00977">
    <property type="entry name" value="FAD_G3PDH_1"/>
    <property type="match status" value="1"/>
</dbReference>
<dbReference type="PROSITE" id="PS00978">
    <property type="entry name" value="FAD_G3PDH_2"/>
    <property type="match status" value="1"/>
</dbReference>
<organism>
    <name type="scientific">Mycobacterium leprae (strain TN)</name>
    <dbReference type="NCBI Taxonomy" id="272631"/>
    <lineage>
        <taxon>Bacteria</taxon>
        <taxon>Bacillati</taxon>
        <taxon>Actinomycetota</taxon>
        <taxon>Actinomycetes</taxon>
        <taxon>Mycobacteriales</taxon>
        <taxon>Mycobacteriaceae</taxon>
        <taxon>Mycobacterium</taxon>
    </lineage>
</organism>
<feature type="chain" id="PRO_0000126099" description="Glycerol-3-phosphate dehydrogenase">
    <location>
        <begin position="1"/>
        <end position="585"/>
    </location>
</feature>
<feature type="binding site" evidence="1">
    <location>
        <begin position="37"/>
        <end position="65"/>
    </location>
    <ligand>
        <name>FAD</name>
        <dbReference type="ChEBI" id="CHEBI:57692"/>
    </ligand>
</feature>
<comment type="catalytic activity">
    <reaction>
        <text>a quinone + sn-glycerol 3-phosphate = dihydroxyacetone phosphate + a quinol</text>
        <dbReference type="Rhea" id="RHEA:18977"/>
        <dbReference type="ChEBI" id="CHEBI:24646"/>
        <dbReference type="ChEBI" id="CHEBI:57597"/>
        <dbReference type="ChEBI" id="CHEBI:57642"/>
        <dbReference type="ChEBI" id="CHEBI:132124"/>
        <dbReference type="EC" id="1.1.5.3"/>
    </reaction>
</comment>
<comment type="cofactor">
    <cofactor>
        <name>FAD</name>
        <dbReference type="ChEBI" id="CHEBI:57692"/>
    </cofactor>
</comment>
<comment type="subcellular location">
    <subcellularLocation>
        <location evidence="1">Cytoplasm</location>
    </subcellularLocation>
</comment>
<comment type="similarity">
    <text evidence="2">Belongs to the FAD-dependent glycerol-3-phosphate dehydrogenase family.</text>
</comment>